<sequence>MASENMTPQDYIGHHLNNLQLDLRTFSLVDPHNPPATFWTINIDSMFFSVVLGLLFLVLFRSVAKKATSGVPGKFQTAIELVIGFVNGSVKDMYHGKSKLIAPLALTIFVWVFLMNLMDLLPIDLLPYIAEHVLGLPALRVVPSADVNVTLSMALGVFILILFYSIKMKGIGGFTKELTLQPFNHWAFIPVNLILEGVSLLSKPVSLGLRLFGNMYAGELIFILIAGLLPWWSQWILNVPWAIFHILIITLQAFIFMVLTIVYLSMASEEH</sequence>
<protein>
    <recommendedName>
        <fullName evidence="1">ATP synthase subunit a</fullName>
    </recommendedName>
    <alternativeName>
        <fullName evidence="1">ATP synthase F0 sector subunit a</fullName>
    </alternativeName>
    <alternativeName>
        <fullName evidence="1">F-ATPase subunit 6</fullName>
    </alternativeName>
</protein>
<organism>
    <name type="scientific">Escherichia coli O81 (strain ED1a)</name>
    <dbReference type="NCBI Taxonomy" id="585397"/>
    <lineage>
        <taxon>Bacteria</taxon>
        <taxon>Pseudomonadati</taxon>
        <taxon>Pseudomonadota</taxon>
        <taxon>Gammaproteobacteria</taxon>
        <taxon>Enterobacterales</taxon>
        <taxon>Enterobacteriaceae</taxon>
        <taxon>Escherichia</taxon>
    </lineage>
</organism>
<gene>
    <name evidence="1" type="primary">atpB</name>
    <name type="ordered locus">ECED1_4428</name>
</gene>
<feature type="chain" id="PRO_1000184282" description="ATP synthase subunit a">
    <location>
        <begin position="1"/>
        <end position="271"/>
    </location>
</feature>
<feature type="transmembrane region" description="Helical" evidence="1">
    <location>
        <begin position="40"/>
        <end position="60"/>
    </location>
</feature>
<feature type="transmembrane region" description="Helical" evidence="1">
    <location>
        <begin position="100"/>
        <end position="120"/>
    </location>
</feature>
<feature type="transmembrane region" description="Helical" evidence="1">
    <location>
        <begin position="146"/>
        <end position="166"/>
    </location>
</feature>
<feature type="transmembrane region" description="Helical" evidence="1">
    <location>
        <begin position="220"/>
        <end position="240"/>
    </location>
</feature>
<feature type="transmembrane region" description="Helical" evidence="1">
    <location>
        <begin position="242"/>
        <end position="262"/>
    </location>
</feature>
<proteinExistence type="inferred from homology"/>
<comment type="function">
    <text evidence="1">Key component of the proton channel; it plays a direct role in the translocation of protons across the membrane.</text>
</comment>
<comment type="subunit">
    <text evidence="1">F-type ATPases have 2 components, CF(1) - the catalytic core - and CF(0) - the membrane proton channel. CF(1) has five subunits: alpha(3), beta(3), gamma(1), delta(1), epsilon(1). CF(0) has three main subunits: a(1), b(2) and c(9-12). The alpha and beta chains form an alternating ring which encloses part of the gamma chain. CF(1) is attached to CF(0) by a central stalk formed by the gamma and epsilon chains, while a peripheral stalk is formed by the delta and b chains.</text>
</comment>
<comment type="subcellular location">
    <subcellularLocation>
        <location evidence="1">Cell inner membrane</location>
        <topology evidence="1">Multi-pass membrane protein</topology>
    </subcellularLocation>
</comment>
<comment type="similarity">
    <text evidence="1">Belongs to the ATPase A chain family.</text>
</comment>
<reference key="1">
    <citation type="journal article" date="2009" name="PLoS Genet.">
        <title>Organised genome dynamics in the Escherichia coli species results in highly diverse adaptive paths.</title>
        <authorList>
            <person name="Touchon M."/>
            <person name="Hoede C."/>
            <person name="Tenaillon O."/>
            <person name="Barbe V."/>
            <person name="Baeriswyl S."/>
            <person name="Bidet P."/>
            <person name="Bingen E."/>
            <person name="Bonacorsi S."/>
            <person name="Bouchier C."/>
            <person name="Bouvet O."/>
            <person name="Calteau A."/>
            <person name="Chiapello H."/>
            <person name="Clermont O."/>
            <person name="Cruveiller S."/>
            <person name="Danchin A."/>
            <person name="Diard M."/>
            <person name="Dossat C."/>
            <person name="Karoui M.E."/>
            <person name="Frapy E."/>
            <person name="Garry L."/>
            <person name="Ghigo J.M."/>
            <person name="Gilles A.M."/>
            <person name="Johnson J."/>
            <person name="Le Bouguenec C."/>
            <person name="Lescat M."/>
            <person name="Mangenot S."/>
            <person name="Martinez-Jehanne V."/>
            <person name="Matic I."/>
            <person name="Nassif X."/>
            <person name="Oztas S."/>
            <person name="Petit M.A."/>
            <person name="Pichon C."/>
            <person name="Rouy Z."/>
            <person name="Ruf C.S."/>
            <person name="Schneider D."/>
            <person name="Tourret J."/>
            <person name="Vacherie B."/>
            <person name="Vallenet D."/>
            <person name="Medigue C."/>
            <person name="Rocha E.P.C."/>
            <person name="Denamur E."/>
        </authorList>
    </citation>
    <scope>NUCLEOTIDE SEQUENCE [LARGE SCALE GENOMIC DNA]</scope>
    <source>
        <strain>ED1a</strain>
    </source>
</reference>
<evidence type="ECO:0000255" key="1">
    <source>
        <dbReference type="HAMAP-Rule" id="MF_01393"/>
    </source>
</evidence>
<accession>B7N241</accession>
<dbReference type="EMBL" id="CU928162">
    <property type="protein sequence ID" value="CAR10412.1"/>
    <property type="molecule type" value="Genomic_DNA"/>
</dbReference>
<dbReference type="RefSeq" id="WP_000135618.1">
    <property type="nucleotide sequence ID" value="NC_011745.1"/>
</dbReference>
<dbReference type="SMR" id="B7N241"/>
<dbReference type="GeneID" id="86948620"/>
<dbReference type="KEGG" id="ecq:ECED1_4428"/>
<dbReference type="HOGENOM" id="CLU_041018_1_0_6"/>
<dbReference type="Proteomes" id="UP000000748">
    <property type="component" value="Chromosome"/>
</dbReference>
<dbReference type="GO" id="GO:0005886">
    <property type="term" value="C:plasma membrane"/>
    <property type="evidence" value="ECO:0007669"/>
    <property type="project" value="UniProtKB-SubCell"/>
</dbReference>
<dbReference type="GO" id="GO:0045259">
    <property type="term" value="C:proton-transporting ATP synthase complex"/>
    <property type="evidence" value="ECO:0007669"/>
    <property type="project" value="UniProtKB-KW"/>
</dbReference>
<dbReference type="GO" id="GO:0046933">
    <property type="term" value="F:proton-transporting ATP synthase activity, rotational mechanism"/>
    <property type="evidence" value="ECO:0007669"/>
    <property type="project" value="UniProtKB-UniRule"/>
</dbReference>
<dbReference type="GO" id="GO:0042777">
    <property type="term" value="P:proton motive force-driven plasma membrane ATP synthesis"/>
    <property type="evidence" value="ECO:0007669"/>
    <property type="project" value="TreeGrafter"/>
</dbReference>
<dbReference type="CDD" id="cd00310">
    <property type="entry name" value="ATP-synt_Fo_a_6"/>
    <property type="match status" value="1"/>
</dbReference>
<dbReference type="FunFam" id="1.20.120.220:FF:000002">
    <property type="entry name" value="ATP synthase subunit a"/>
    <property type="match status" value="1"/>
</dbReference>
<dbReference type="Gene3D" id="1.20.120.220">
    <property type="entry name" value="ATP synthase, F0 complex, subunit A"/>
    <property type="match status" value="1"/>
</dbReference>
<dbReference type="HAMAP" id="MF_01393">
    <property type="entry name" value="ATP_synth_a_bact"/>
    <property type="match status" value="1"/>
</dbReference>
<dbReference type="InterPro" id="IPR045082">
    <property type="entry name" value="ATP_syn_F0_a_bact/chloroplast"/>
</dbReference>
<dbReference type="InterPro" id="IPR000568">
    <property type="entry name" value="ATP_synth_F0_asu"/>
</dbReference>
<dbReference type="InterPro" id="IPR023011">
    <property type="entry name" value="ATP_synth_F0_asu_AS"/>
</dbReference>
<dbReference type="InterPro" id="IPR035908">
    <property type="entry name" value="F0_ATP_A_sf"/>
</dbReference>
<dbReference type="NCBIfam" id="TIGR01131">
    <property type="entry name" value="ATP_synt_6_or_A"/>
    <property type="match status" value="1"/>
</dbReference>
<dbReference type="NCBIfam" id="NF004477">
    <property type="entry name" value="PRK05815.1-1"/>
    <property type="match status" value="1"/>
</dbReference>
<dbReference type="PANTHER" id="PTHR42823">
    <property type="entry name" value="ATP SYNTHASE SUBUNIT A, CHLOROPLASTIC"/>
    <property type="match status" value="1"/>
</dbReference>
<dbReference type="PANTHER" id="PTHR42823:SF3">
    <property type="entry name" value="ATP SYNTHASE SUBUNIT A, CHLOROPLASTIC"/>
    <property type="match status" value="1"/>
</dbReference>
<dbReference type="Pfam" id="PF00119">
    <property type="entry name" value="ATP-synt_A"/>
    <property type="match status" value="1"/>
</dbReference>
<dbReference type="PRINTS" id="PR00123">
    <property type="entry name" value="ATPASEA"/>
</dbReference>
<dbReference type="SUPFAM" id="SSF81336">
    <property type="entry name" value="F1F0 ATP synthase subunit A"/>
    <property type="match status" value="1"/>
</dbReference>
<dbReference type="PROSITE" id="PS00449">
    <property type="entry name" value="ATPASE_A"/>
    <property type="match status" value="1"/>
</dbReference>
<keyword id="KW-0066">ATP synthesis</keyword>
<keyword id="KW-0997">Cell inner membrane</keyword>
<keyword id="KW-1003">Cell membrane</keyword>
<keyword id="KW-0138">CF(0)</keyword>
<keyword id="KW-0375">Hydrogen ion transport</keyword>
<keyword id="KW-0406">Ion transport</keyword>
<keyword id="KW-0472">Membrane</keyword>
<keyword id="KW-0812">Transmembrane</keyword>
<keyword id="KW-1133">Transmembrane helix</keyword>
<keyword id="KW-0813">Transport</keyword>
<name>ATP6_ECO81</name>